<geneLocation type="plasmid">
    <name>pSymA</name>
    <name>megaplasmid 1</name>
</geneLocation>
<proteinExistence type="inferred from homology"/>
<reference key="1">
    <citation type="journal article" date="2001" name="Proc. Natl. Acad. Sci. U.S.A.">
        <title>Nucleotide sequence and predicted functions of the entire Sinorhizobium meliloti pSymA megaplasmid.</title>
        <authorList>
            <person name="Barnett M.J."/>
            <person name="Fisher R.F."/>
            <person name="Jones T."/>
            <person name="Komp C."/>
            <person name="Abola A.P."/>
            <person name="Barloy-Hubler F."/>
            <person name="Bowser L."/>
            <person name="Capela D."/>
            <person name="Galibert F."/>
            <person name="Gouzy J."/>
            <person name="Gurjal M."/>
            <person name="Hong A."/>
            <person name="Huizar L."/>
            <person name="Hyman R.W."/>
            <person name="Kahn D."/>
            <person name="Kahn M.L."/>
            <person name="Kalman S."/>
            <person name="Keating D.H."/>
            <person name="Palm C."/>
            <person name="Peck M.C."/>
            <person name="Surzycki R."/>
            <person name="Wells D.H."/>
            <person name="Yeh K.-C."/>
            <person name="Davis R.W."/>
            <person name="Federspiel N.A."/>
            <person name="Long S.R."/>
        </authorList>
    </citation>
    <scope>NUCLEOTIDE SEQUENCE [LARGE SCALE GENOMIC DNA]</scope>
    <source>
        <strain>1021</strain>
    </source>
</reference>
<reference key="2">
    <citation type="journal article" date="2001" name="Science">
        <title>The composite genome of the legume symbiont Sinorhizobium meliloti.</title>
        <authorList>
            <person name="Galibert F."/>
            <person name="Finan T.M."/>
            <person name="Long S.R."/>
            <person name="Puehler A."/>
            <person name="Abola P."/>
            <person name="Ampe F."/>
            <person name="Barloy-Hubler F."/>
            <person name="Barnett M.J."/>
            <person name="Becker A."/>
            <person name="Boistard P."/>
            <person name="Bothe G."/>
            <person name="Boutry M."/>
            <person name="Bowser L."/>
            <person name="Buhrmester J."/>
            <person name="Cadieu E."/>
            <person name="Capela D."/>
            <person name="Chain P."/>
            <person name="Cowie A."/>
            <person name="Davis R.W."/>
            <person name="Dreano S."/>
            <person name="Federspiel N.A."/>
            <person name="Fisher R.F."/>
            <person name="Gloux S."/>
            <person name="Godrie T."/>
            <person name="Goffeau A."/>
            <person name="Golding B."/>
            <person name="Gouzy J."/>
            <person name="Gurjal M."/>
            <person name="Hernandez-Lucas I."/>
            <person name="Hong A."/>
            <person name="Huizar L."/>
            <person name="Hyman R.W."/>
            <person name="Jones T."/>
            <person name="Kahn D."/>
            <person name="Kahn M.L."/>
            <person name="Kalman S."/>
            <person name="Keating D.H."/>
            <person name="Kiss E."/>
            <person name="Komp C."/>
            <person name="Lelaure V."/>
            <person name="Masuy D."/>
            <person name="Palm C."/>
            <person name="Peck M.C."/>
            <person name="Pohl T.M."/>
            <person name="Portetelle D."/>
            <person name="Purnelle B."/>
            <person name="Ramsperger U."/>
            <person name="Surzycki R."/>
            <person name="Thebault P."/>
            <person name="Vandenbol M."/>
            <person name="Vorhoelter F.J."/>
            <person name="Weidner S."/>
            <person name="Wells D.H."/>
            <person name="Wong K."/>
            <person name="Yeh K.-C."/>
            <person name="Batut J."/>
        </authorList>
    </citation>
    <scope>NUCLEOTIDE SEQUENCE [LARGE SCALE GENOMIC DNA]</scope>
    <source>
        <strain>1021</strain>
    </source>
</reference>
<sequence>MLQPWSEIAPRLVDVAMGRKPADLVVRNGRWVNVYSGEIVPGADIAIVGGRFAYVGPDAGHTIGEGTKIVDAAGRYLVPGLCDGHMHVESGLVTVTEFARAVIPHGTTTMFVDPHEIANVLGIAGVKLMNDEAQTLPVNIFVQVPSCVPSAPGLENAGATLSAADVREALAWPNIIGLGEMMNFPGVAANDSKMVAEIAATRAAGLTVGGHYASPDLGRAFHAYAAGGPADDHEGTTVEDAIARVRQGMRSMLRLGSAWFDVAAQVKAITERGIDPRNFVLCTDDSHSGTLVSDGHMNRVVRHAISQGLKPITAIQMATLNTAQHFGLERDLGSIAPGRRADLIVTSDLTALPIEIVFVRGRLLAEKGVLVADIPAYDYPASAKNTVKLGKRLAPTDFDICAAGSSEVEVRVIGVIENQAPTKALQRRLPVECGVVQMDRASDVCQIALVERHRATGGVINAFVSGFGYDTHCAMASTVAHDSHHMIVVGTNKADMAQAANRLQEVGGGIVLIAGGRELALVELPVAGLMSDQRAEIVAEKASRLVEAMRACGCKLNNAYMQHSLLALVVIPELRISDVGLIDVTRFESTEVIVR</sequence>
<evidence type="ECO:0000255" key="1">
    <source>
        <dbReference type="HAMAP-Rule" id="MF_01518"/>
    </source>
</evidence>
<dbReference type="EC" id="3.5.4.2" evidence="1"/>
<dbReference type="EMBL" id="AE006469">
    <property type="protein sequence ID" value="AAK65600.1"/>
    <property type="molecule type" value="Genomic_DNA"/>
</dbReference>
<dbReference type="PIR" id="F95379">
    <property type="entry name" value="F95379"/>
</dbReference>
<dbReference type="RefSeq" id="NP_436188.1">
    <property type="nucleotide sequence ID" value="NC_003037.1"/>
</dbReference>
<dbReference type="SMR" id="Q92YE2"/>
<dbReference type="EnsemblBacteria" id="AAK65600">
    <property type="protein sequence ID" value="AAK65600"/>
    <property type="gene ID" value="SMa1715"/>
</dbReference>
<dbReference type="KEGG" id="sme:SMa1715"/>
<dbReference type="PATRIC" id="fig|266834.11.peg.971"/>
<dbReference type="HOGENOM" id="CLU_027935_0_0_5"/>
<dbReference type="OrthoDB" id="9775607at2"/>
<dbReference type="Proteomes" id="UP000001976">
    <property type="component" value="Plasmid pSymA"/>
</dbReference>
<dbReference type="GO" id="GO:0000034">
    <property type="term" value="F:adenine deaminase activity"/>
    <property type="evidence" value="ECO:0007669"/>
    <property type="project" value="UniProtKB-UniRule"/>
</dbReference>
<dbReference type="GO" id="GO:0006146">
    <property type="term" value="P:adenine catabolic process"/>
    <property type="evidence" value="ECO:0007669"/>
    <property type="project" value="InterPro"/>
</dbReference>
<dbReference type="CDD" id="cd01295">
    <property type="entry name" value="AdeC"/>
    <property type="match status" value="1"/>
</dbReference>
<dbReference type="Gene3D" id="3.20.20.140">
    <property type="entry name" value="Metal-dependent hydrolases"/>
    <property type="match status" value="1"/>
</dbReference>
<dbReference type="Gene3D" id="2.30.40.10">
    <property type="entry name" value="Urease, subunit C, domain 1"/>
    <property type="match status" value="1"/>
</dbReference>
<dbReference type="HAMAP" id="MF_01518">
    <property type="entry name" value="Adenine_deamin"/>
    <property type="match status" value="1"/>
</dbReference>
<dbReference type="InterPro" id="IPR006679">
    <property type="entry name" value="Adenine_deam"/>
</dbReference>
<dbReference type="InterPro" id="IPR026912">
    <property type="entry name" value="Adenine_deam_C"/>
</dbReference>
<dbReference type="InterPro" id="IPR006680">
    <property type="entry name" value="Amidohydro-rel"/>
</dbReference>
<dbReference type="InterPro" id="IPR011059">
    <property type="entry name" value="Metal-dep_hydrolase_composite"/>
</dbReference>
<dbReference type="InterPro" id="IPR032466">
    <property type="entry name" value="Metal_Hydrolase"/>
</dbReference>
<dbReference type="NCBIfam" id="TIGR01178">
    <property type="entry name" value="ade"/>
    <property type="match status" value="1"/>
</dbReference>
<dbReference type="PANTHER" id="PTHR11113:SF2">
    <property type="entry name" value="ADENINE DEAMINASE"/>
    <property type="match status" value="1"/>
</dbReference>
<dbReference type="PANTHER" id="PTHR11113">
    <property type="entry name" value="N-ACETYLGLUCOSAMINE-6-PHOSPHATE DEACETYLASE"/>
    <property type="match status" value="1"/>
</dbReference>
<dbReference type="Pfam" id="PF13382">
    <property type="entry name" value="Adenine_deam_C"/>
    <property type="match status" value="1"/>
</dbReference>
<dbReference type="Pfam" id="PF01979">
    <property type="entry name" value="Amidohydro_1"/>
    <property type="match status" value="1"/>
</dbReference>
<dbReference type="SUPFAM" id="SSF51338">
    <property type="entry name" value="Composite domain of metallo-dependent hydrolases"/>
    <property type="match status" value="1"/>
</dbReference>
<dbReference type="SUPFAM" id="SSF51556">
    <property type="entry name" value="Metallo-dependent hydrolases"/>
    <property type="match status" value="1"/>
</dbReference>
<keyword id="KW-0378">Hydrolase</keyword>
<keyword id="KW-0464">Manganese</keyword>
<keyword id="KW-0614">Plasmid</keyword>
<keyword id="KW-1185">Reference proteome</keyword>
<accession>Q92YE2</accession>
<feature type="chain" id="PRO_0000142434" description="Adenine deaminase 3">
    <location>
        <begin position="1"/>
        <end position="595"/>
    </location>
</feature>
<gene>
    <name evidence="1" type="primary">ade3</name>
    <name type="synonym">adeC3</name>
    <name type="ordered locus">RA0942</name>
    <name type="ORF">SMa1715</name>
</gene>
<protein>
    <recommendedName>
        <fullName evidence="1">Adenine deaminase 3</fullName>
        <shortName evidence="1">Adenase 3</shortName>
        <shortName evidence="1">Adenine aminase 3</shortName>
        <ecNumber evidence="1">3.5.4.2</ecNumber>
    </recommendedName>
</protein>
<organism>
    <name type="scientific">Rhizobium meliloti (strain 1021)</name>
    <name type="common">Ensifer meliloti</name>
    <name type="synonym">Sinorhizobium meliloti</name>
    <dbReference type="NCBI Taxonomy" id="266834"/>
    <lineage>
        <taxon>Bacteria</taxon>
        <taxon>Pseudomonadati</taxon>
        <taxon>Pseudomonadota</taxon>
        <taxon>Alphaproteobacteria</taxon>
        <taxon>Hyphomicrobiales</taxon>
        <taxon>Rhizobiaceae</taxon>
        <taxon>Sinorhizobium/Ensifer group</taxon>
        <taxon>Sinorhizobium</taxon>
    </lineage>
</organism>
<name>ADEC3_RHIME</name>
<comment type="catalytic activity">
    <reaction evidence="1">
        <text>adenine + H2O + H(+) = hypoxanthine + NH4(+)</text>
        <dbReference type="Rhea" id="RHEA:23688"/>
        <dbReference type="ChEBI" id="CHEBI:15377"/>
        <dbReference type="ChEBI" id="CHEBI:15378"/>
        <dbReference type="ChEBI" id="CHEBI:16708"/>
        <dbReference type="ChEBI" id="CHEBI:17368"/>
        <dbReference type="ChEBI" id="CHEBI:28938"/>
        <dbReference type="EC" id="3.5.4.2"/>
    </reaction>
</comment>
<comment type="cofactor">
    <cofactor evidence="1">
        <name>Mn(2+)</name>
        <dbReference type="ChEBI" id="CHEBI:29035"/>
    </cofactor>
</comment>
<comment type="similarity">
    <text evidence="1">Belongs to the metallo-dependent hydrolases superfamily. Adenine deaminase family.</text>
</comment>